<evidence type="ECO:0000255" key="1">
    <source>
        <dbReference type="HAMAP-Rule" id="MF_01307"/>
    </source>
</evidence>
<evidence type="ECO:0000305" key="2"/>
<keyword id="KW-0687">Ribonucleoprotein</keyword>
<keyword id="KW-0689">Ribosomal protein</keyword>
<keyword id="KW-0694">RNA-binding</keyword>
<keyword id="KW-0699">rRNA-binding</keyword>
<gene>
    <name evidence="1" type="primary">rpsE</name>
    <name type="ordered locus">A1E_04285</name>
</gene>
<sequence>MSKVKKNEETLSEVLVDVNRITKVVKGGRRFAFSACMVVGDKAGRVGAGHGKAKEVNEARGKAKQAAKKRMMKVPLYQNRTIHHDVIGKSGAAKVILRRAKAGTGVIAGGSMRAIFHSLGVHDIVAKSIGSTNVYAMISATFDALNKLASPKSIAMRRDKRVNEISVKSYDV</sequence>
<protein>
    <recommendedName>
        <fullName evidence="1">Small ribosomal subunit protein uS5</fullName>
    </recommendedName>
    <alternativeName>
        <fullName evidence="2">30S ribosomal protein S5</fullName>
    </alternativeName>
</protein>
<comment type="function">
    <text evidence="1">With S4 and S12 plays an important role in translational accuracy.</text>
</comment>
<comment type="function">
    <text evidence="1">Located at the back of the 30S subunit body where it stabilizes the conformation of the head with respect to the body.</text>
</comment>
<comment type="subunit">
    <text evidence="1">Part of the 30S ribosomal subunit. Contacts proteins S4 and S8.</text>
</comment>
<comment type="domain">
    <text>The N-terminal domain interacts with the head of the 30S subunit; the C-terminal domain interacts with the body and contacts protein S4. The interaction surface between S4 and S5 is involved in control of translational fidelity.</text>
</comment>
<comment type="similarity">
    <text evidence="1">Belongs to the universal ribosomal protein uS5 family.</text>
</comment>
<accession>A8EZJ9</accession>
<name>RS5_RICCK</name>
<reference key="1">
    <citation type="submission" date="2007-09" db="EMBL/GenBank/DDBJ databases">
        <title>Complete genome sequence of Rickettsia canadensis.</title>
        <authorList>
            <person name="Madan A."/>
            <person name="Fahey J."/>
            <person name="Helton E."/>
            <person name="Ketteman M."/>
            <person name="Madan A."/>
            <person name="Rodrigues S."/>
            <person name="Sanchez A."/>
            <person name="Whiting M."/>
            <person name="Dasch G."/>
            <person name="Eremeeva M."/>
        </authorList>
    </citation>
    <scope>NUCLEOTIDE SEQUENCE [LARGE SCALE GENOMIC DNA]</scope>
    <source>
        <strain>McKiel</strain>
    </source>
</reference>
<organism>
    <name type="scientific">Rickettsia canadensis (strain McKiel)</name>
    <dbReference type="NCBI Taxonomy" id="293613"/>
    <lineage>
        <taxon>Bacteria</taxon>
        <taxon>Pseudomonadati</taxon>
        <taxon>Pseudomonadota</taxon>
        <taxon>Alphaproteobacteria</taxon>
        <taxon>Rickettsiales</taxon>
        <taxon>Rickettsiaceae</taxon>
        <taxon>Rickettsieae</taxon>
        <taxon>Rickettsia</taxon>
        <taxon>belli group</taxon>
    </lineage>
</organism>
<proteinExistence type="inferred from homology"/>
<feature type="chain" id="PRO_0000323184" description="Small ribosomal subunit protein uS5">
    <location>
        <begin position="1"/>
        <end position="172"/>
    </location>
</feature>
<feature type="domain" description="S5 DRBM" evidence="1">
    <location>
        <begin position="11"/>
        <end position="74"/>
    </location>
</feature>
<dbReference type="EMBL" id="CP000409">
    <property type="protein sequence ID" value="ABV73782.1"/>
    <property type="molecule type" value="Genomic_DNA"/>
</dbReference>
<dbReference type="RefSeq" id="WP_012148977.1">
    <property type="nucleotide sequence ID" value="NC_009879.1"/>
</dbReference>
<dbReference type="SMR" id="A8EZJ9"/>
<dbReference type="STRING" id="293613.A1E_04285"/>
<dbReference type="KEGG" id="rcm:A1E_04285"/>
<dbReference type="eggNOG" id="COG0098">
    <property type="taxonomic scope" value="Bacteria"/>
</dbReference>
<dbReference type="HOGENOM" id="CLU_065898_2_2_5"/>
<dbReference type="Proteomes" id="UP000007056">
    <property type="component" value="Chromosome"/>
</dbReference>
<dbReference type="GO" id="GO:0015935">
    <property type="term" value="C:small ribosomal subunit"/>
    <property type="evidence" value="ECO:0007669"/>
    <property type="project" value="InterPro"/>
</dbReference>
<dbReference type="GO" id="GO:0019843">
    <property type="term" value="F:rRNA binding"/>
    <property type="evidence" value="ECO:0007669"/>
    <property type="project" value="UniProtKB-UniRule"/>
</dbReference>
<dbReference type="GO" id="GO:0003735">
    <property type="term" value="F:structural constituent of ribosome"/>
    <property type="evidence" value="ECO:0007669"/>
    <property type="project" value="InterPro"/>
</dbReference>
<dbReference type="GO" id="GO:0006412">
    <property type="term" value="P:translation"/>
    <property type="evidence" value="ECO:0007669"/>
    <property type="project" value="UniProtKB-UniRule"/>
</dbReference>
<dbReference type="FunFam" id="3.30.230.10:FF:000002">
    <property type="entry name" value="30S ribosomal protein S5"/>
    <property type="match status" value="1"/>
</dbReference>
<dbReference type="Gene3D" id="3.30.160.20">
    <property type="match status" value="1"/>
</dbReference>
<dbReference type="Gene3D" id="3.30.230.10">
    <property type="match status" value="1"/>
</dbReference>
<dbReference type="HAMAP" id="MF_01307_B">
    <property type="entry name" value="Ribosomal_uS5_B"/>
    <property type="match status" value="1"/>
</dbReference>
<dbReference type="InterPro" id="IPR020568">
    <property type="entry name" value="Ribosomal_Su5_D2-typ_SF"/>
</dbReference>
<dbReference type="InterPro" id="IPR000851">
    <property type="entry name" value="Ribosomal_uS5"/>
</dbReference>
<dbReference type="InterPro" id="IPR005712">
    <property type="entry name" value="Ribosomal_uS5_bac-type"/>
</dbReference>
<dbReference type="InterPro" id="IPR005324">
    <property type="entry name" value="Ribosomal_uS5_C"/>
</dbReference>
<dbReference type="InterPro" id="IPR013810">
    <property type="entry name" value="Ribosomal_uS5_N"/>
</dbReference>
<dbReference type="InterPro" id="IPR018192">
    <property type="entry name" value="Ribosomal_uS5_N_CS"/>
</dbReference>
<dbReference type="InterPro" id="IPR014721">
    <property type="entry name" value="Ribsml_uS5_D2-typ_fold_subgr"/>
</dbReference>
<dbReference type="NCBIfam" id="TIGR01021">
    <property type="entry name" value="rpsE_bact"/>
    <property type="match status" value="1"/>
</dbReference>
<dbReference type="PANTHER" id="PTHR48277">
    <property type="entry name" value="MITOCHONDRIAL RIBOSOMAL PROTEIN S5"/>
    <property type="match status" value="1"/>
</dbReference>
<dbReference type="PANTHER" id="PTHR48277:SF1">
    <property type="entry name" value="MITOCHONDRIAL RIBOSOMAL PROTEIN S5"/>
    <property type="match status" value="1"/>
</dbReference>
<dbReference type="Pfam" id="PF00333">
    <property type="entry name" value="Ribosomal_S5"/>
    <property type="match status" value="1"/>
</dbReference>
<dbReference type="Pfam" id="PF03719">
    <property type="entry name" value="Ribosomal_S5_C"/>
    <property type="match status" value="1"/>
</dbReference>
<dbReference type="SUPFAM" id="SSF54768">
    <property type="entry name" value="dsRNA-binding domain-like"/>
    <property type="match status" value="1"/>
</dbReference>
<dbReference type="SUPFAM" id="SSF54211">
    <property type="entry name" value="Ribosomal protein S5 domain 2-like"/>
    <property type="match status" value="1"/>
</dbReference>
<dbReference type="PROSITE" id="PS00585">
    <property type="entry name" value="RIBOSOMAL_S5"/>
    <property type="match status" value="1"/>
</dbReference>
<dbReference type="PROSITE" id="PS50881">
    <property type="entry name" value="S5_DSRBD"/>
    <property type="match status" value="1"/>
</dbReference>